<name>ERG24_BOVIN</name>
<accession>Q8WMV1</accession>
<proteinExistence type="evidence at protein level"/>
<reference key="1">
    <citation type="journal article" date="2002" name="Eur. J. Biochem.">
        <title>Cloning and expression of sterol Delta14-reductase from bovine liver.</title>
        <authorList>
            <person name="Roberti R."/>
            <person name="Bennati A.M."/>
            <person name="Galli G."/>
            <person name="Caruso D."/>
            <person name="Maras B."/>
            <person name="Aisa C."/>
            <person name="Beccari T."/>
            <person name="Della Fazia M.A."/>
            <person name="Servillo G."/>
        </authorList>
    </citation>
    <scope>NUCLEOTIDE SEQUENCE [MRNA]</scope>
    <scope>PARTIAL PROTEIN SEQUENCE</scope>
    <scope>FUNCTION</scope>
    <scope>CATALYTIC ACTIVITY</scope>
    <scope>SUBCELLULAR LOCATION</scope>
    <scope>TISSUE SPECIFICITY</scope>
</reference>
<reference key="2">
    <citation type="journal article" date="2006" name="Biochim. Biophys. Acta">
        <title>Sterol dependent regulation of human TM7SF2 gene expression: role of the encoded 3beta-hydroxysterol Delta14-reductase in human cholesterol biosynthesis.</title>
        <authorList>
            <person name="Bennati A.M."/>
            <person name="Castelli M."/>
            <person name="Della Fazia M.A."/>
            <person name="Beccari T."/>
            <person name="Caruso D."/>
            <person name="Servillo G."/>
            <person name="Roberti R."/>
        </authorList>
    </citation>
    <scope>FUNCTION</scope>
    <scope>CATALYTIC ACTIVITY</scope>
</reference>
<organism>
    <name type="scientific">Bos taurus</name>
    <name type="common">Bovine</name>
    <dbReference type="NCBI Taxonomy" id="9913"/>
    <lineage>
        <taxon>Eukaryota</taxon>
        <taxon>Metazoa</taxon>
        <taxon>Chordata</taxon>
        <taxon>Craniata</taxon>
        <taxon>Vertebrata</taxon>
        <taxon>Euteleostomi</taxon>
        <taxon>Mammalia</taxon>
        <taxon>Eutheria</taxon>
        <taxon>Laurasiatheria</taxon>
        <taxon>Artiodactyla</taxon>
        <taxon>Ruminantia</taxon>
        <taxon>Pecora</taxon>
        <taxon>Bovidae</taxon>
        <taxon>Bovinae</taxon>
        <taxon>Bos</taxon>
    </lineage>
</organism>
<gene>
    <name type="primary">TM7SF2</name>
</gene>
<feature type="chain" id="PRO_0000244771" description="Delta(14)-sterol reductase TM7SF2">
    <location>
        <begin position="1"/>
        <end position="418"/>
    </location>
</feature>
<feature type="transmembrane region" description="Helical" evidence="3">
    <location>
        <begin position="13"/>
        <end position="35"/>
    </location>
</feature>
<feature type="transmembrane region" description="Helical" evidence="3">
    <location>
        <begin position="62"/>
        <end position="81"/>
    </location>
</feature>
<feature type="transmembrane region" description="Helical" evidence="3">
    <location>
        <begin position="102"/>
        <end position="124"/>
    </location>
</feature>
<feature type="transmembrane region" description="Helical" evidence="3">
    <location>
        <begin position="129"/>
        <end position="148"/>
    </location>
</feature>
<feature type="transmembrane region" description="Helical" evidence="3">
    <location>
        <begin position="255"/>
        <end position="277"/>
    </location>
</feature>
<feature type="transmembrane region" description="Helical" evidence="3">
    <location>
        <begin position="287"/>
        <end position="304"/>
    </location>
</feature>
<feature type="transmembrane region" description="Helical" evidence="3">
    <location>
        <begin position="355"/>
        <end position="377"/>
    </location>
</feature>
<feature type="binding site" evidence="1">
    <location>
        <position position="311"/>
    </location>
    <ligand>
        <name>NADP(+)</name>
        <dbReference type="ChEBI" id="CHEBI:58349"/>
    </ligand>
</feature>
<feature type="binding site" evidence="1">
    <location>
        <position position="315"/>
    </location>
    <ligand>
        <name>NADP(+)</name>
        <dbReference type="ChEBI" id="CHEBI:58349"/>
    </ligand>
</feature>
<feature type="binding site" evidence="1">
    <location>
        <position position="338"/>
    </location>
    <ligand>
        <name>NADP(+)</name>
        <dbReference type="ChEBI" id="CHEBI:58349"/>
    </ligand>
</feature>
<feature type="binding site" evidence="1">
    <location>
        <position position="343"/>
    </location>
    <ligand>
        <name>NADP(+)</name>
        <dbReference type="ChEBI" id="CHEBI:58349"/>
    </ligand>
</feature>
<feature type="binding site" evidence="1">
    <location>
        <begin position="350"/>
        <end position="351"/>
    </location>
    <ligand>
        <name>NADP(+)</name>
        <dbReference type="ChEBI" id="CHEBI:58349"/>
    </ligand>
</feature>
<feature type="binding site" evidence="1">
    <location>
        <position position="390"/>
    </location>
    <ligand>
        <name>NADP(+)</name>
        <dbReference type="ChEBI" id="CHEBI:58349"/>
    </ligand>
</feature>
<feature type="binding site" evidence="1">
    <location>
        <begin position="394"/>
        <end position="398"/>
    </location>
    <ligand>
        <name>NADP(+)</name>
        <dbReference type="ChEBI" id="CHEBI:58349"/>
    </ligand>
</feature>
<feature type="binding site" evidence="1">
    <location>
        <position position="405"/>
    </location>
    <ligand>
        <name>NADP(+)</name>
        <dbReference type="ChEBI" id="CHEBI:58349"/>
    </ligand>
</feature>
<dbReference type="EC" id="1.3.1.70" evidence="4"/>
<dbReference type="EMBL" id="AY039681">
    <property type="protein sequence ID" value="AAK91505.1"/>
    <property type="molecule type" value="mRNA"/>
</dbReference>
<dbReference type="SMR" id="Q8WMV1"/>
<dbReference type="FunCoup" id="Q8WMV1">
    <property type="interactions" value="604"/>
</dbReference>
<dbReference type="STRING" id="9913.ENSBTAP00000062230"/>
<dbReference type="SwissLipids" id="SLP:000001238"/>
<dbReference type="PaxDb" id="9913-ENSBTAP00000006683"/>
<dbReference type="eggNOG" id="KOG1435">
    <property type="taxonomic scope" value="Eukaryota"/>
</dbReference>
<dbReference type="InParanoid" id="Q8WMV1"/>
<dbReference type="OrthoDB" id="5326588at2759"/>
<dbReference type="UniPathway" id="UPA00063"/>
<dbReference type="Proteomes" id="UP000009136">
    <property type="component" value="Unplaced"/>
</dbReference>
<dbReference type="GO" id="GO:0005789">
    <property type="term" value="C:endoplasmic reticulum membrane"/>
    <property type="evidence" value="ECO:0000318"/>
    <property type="project" value="GO_Central"/>
</dbReference>
<dbReference type="GO" id="GO:0005637">
    <property type="term" value="C:nuclear inner membrane"/>
    <property type="evidence" value="ECO:0000318"/>
    <property type="project" value="GO_Central"/>
</dbReference>
<dbReference type="GO" id="GO:0050613">
    <property type="term" value="F:Delta14-sterol reductase activity"/>
    <property type="evidence" value="ECO:0000314"/>
    <property type="project" value="UniProtKB"/>
</dbReference>
<dbReference type="GO" id="GO:0050661">
    <property type="term" value="F:NADP binding"/>
    <property type="evidence" value="ECO:0000250"/>
    <property type="project" value="UniProtKB"/>
</dbReference>
<dbReference type="GO" id="GO:0006695">
    <property type="term" value="P:cholesterol biosynthetic process"/>
    <property type="evidence" value="ECO:0000314"/>
    <property type="project" value="UniProtKB"/>
</dbReference>
<dbReference type="FunFam" id="1.20.120.1630:FF:000001">
    <property type="entry name" value="delta(14)-sterol reductase isoform X1"/>
    <property type="match status" value="1"/>
</dbReference>
<dbReference type="Gene3D" id="1.20.120.1630">
    <property type="match status" value="1"/>
</dbReference>
<dbReference type="InterPro" id="IPR001171">
    <property type="entry name" value="ERG24_DHCR-like"/>
</dbReference>
<dbReference type="InterPro" id="IPR018083">
    <property type="entry name" value="Sterol_reductase_CS"/>
</dbReference>
<dbReference type="PANTHER" id="PTHR21257">
    <property type="entry name" value="DELTA(14)-STEROL REDUCTASE"/>
    <property type="match status" value="1"/>
</dbReference>
<dbReference type="PANTHER" id="PTHR21257:SF52">
    <property type="entry name" value="DELTA(14)-STEROL REDUCTASE TM7SF2"/>
    <property type="match status" value="1"/>
</dbReference>
<dbReference type="Pfam" id="PF01222">
    <property type="entry name" value="ERG4_ERG24"/>
    <property type="match status" value="1"/>
</dbReference>
<dbReference type="PROSITE" id="PS01017">
    <property type="entry name" value="STEROL_REDUCT_1"/>
    <property type="match status" value="1"/>
</dbReference>
<dbReference type="PROSITE" id="PS01018">
    <property type="entry name" value="STEROL_REDUCT_2"/>
    <property type="match status" value="1"/>
</dbReference>
<evidence type="ECO:0000250" key="1">
    <source>
        <dbReference type="UniProtKB" id="G4SW86"/>
    </source>
</evidence>
<evidence type="ECO:0000250" key="2">
    <source>
        <dbReference type="UniProtKB" id="Q71KT5"/>
    </source>
</evidence>
<evidence type="ECO:0000255" key="3"/>
<evidence type="ECO:0000269" key="4">
    <source>
    </source>
</evidence>
<evidence type="ECO:0000269" key="5">
    <source>
    </source>
</evidence>
<evidence type="ECO:0000303" key="6">
    <source>
    </source>
</evidence>
<evidence type="ECO:0000305" key="7"/>
<protein>
    <recommendedName>
        <fullName>Delta(14)-sterol reductase TM7SF2</fullName>
        <shortName>Delta-14-SR</shortName>
        <ecNumber evidence="4">1.3.1.70</ecNumber>
    </recommendedName>
    <alternativeName>
        <fullName evidence="6">3-beta-hydroxysterol Delta (14)-reductase</fullName>
    </alternativeName>
    <alternativeName>
        <fullName>C-14 sterol reductase</fullName>
    </alternativeName>
    <alternativeName>
        <fullName>Sterol C14-reductase</fullName>
    </alternativeName>
    <alternativeName>
        <fullName>Transmembrane 7 superfamily member 2</fullName>
    </alternativeName>
</protein>
<sequence length="418" mass="46751">MAPPQGSRAPLEFGGPLGAAALMLLLPVTMFHLLLVARSGPARLLGPPPYLPGPEELWSPWALLLCLTWLGLQAALYLLPARKVAEGQELKDKSRLRYPTNGFQALVLTALLVGLGVSAGLPLSALPEMLLPLAFAATLTAFIFSLLLYLKALLAPASALAPGGNSGNLIYDFFLGRELNPRICSFDFKYFCELRPGLIGWVLINLALLIQEAELRGSPSLAMWLVNGFQLLYVGDALWYEEAVLTTMDIIHDGFGFMLAFGDLAWVPFTYSLQAQFLLYHPQPLGWPLASFICLINAVGYYIFRGANSQKNTFRKNPSDPRVADLETISTATGRRLLVSGWWGMVRHPNYLGDLIMALAWSLPCGVFHLLPYFYFLYFTALLVHREDRDERQCRQKYGLAWHEYCRRVPYRIVPYVY</sequence>
<comment type="function">
    <text evidence="4 5">Catalyzes the reduction of the C14-unsaturated bond of lanosterol, as part of the metabolic pathway leading to cholesterol biosynthesis.</text>
</comment>
<comment type="catalytic activity">
    <reaction evidence="4">
        <text>4,4-dimethyl-5alpha-cholesta-8,24-dien-3beta-ol + NADP(+) = 4,4-dimethyl-5alpha-cholesta-8,14,24-trien-3beta-ol + NADPH + H(+)</text>
        <dbReference type="Rhea" id="RHEA:18561"/>
        <dbReference type="ChEBI" id="CHEBI:15378"/>
        <dbReference type="ChEBI" id="CHEBI:17813"/>
        <dbReference type="ChEBI" id="CHEBI:18364"/>
        <dbReference type="ChEBI" id="CHEBI:57783"/>
        <dbReference type="ChEBI" id="CHEBI:58349"/>
        <dbReference type="EC" id="1.3.1.70"/>
    </reaction>
</comment>
<comment type="catalytic activity">
    <reaction evidence="4 5">
        <text>5alpha-cholest-8,14-dien-3beta-ol + NADPH + H(+) = 5alpha-cholest-8-en-3beta-ol + NADP(+)</text>
        <dbReference type="Rhea" id="RHEA:46456"/>
        <dbReference type="ChEBI" id="CHEBI:15378"/>
        <dbReference type="ChEBI" id="CHEBI:16608"/>
        <dbReference type="ChEBI" id="CHEBI:57783"/>
        <dbReference type="ChEBI" id="CHEBI:58349"/>
        <dbReference type="ChEBI" id="CHEBI:86131"/>
    </reaction>
</comment>
<comment type="catalytic activity">
    <reaction evidence="4">
        <text>4,4-dimethyl-8,14-cholestadien-3beta-ol + NADPH + H(+) = 4,4-dimethyl-5alpha-cholest-8-en-3beta-ol + NADP(+)</text>
        <dbReference type="Rhea" id="RHEA:46812"/>
        <dbReference type="ChEBI" id="CHEBI:15378"/>
        <dbReference type="ChEBI" id="CHEBI:57783"/>
        <dbReference type="ChEBI" id="CHEBI:58349"/>
        <dbReference type="ChEBI" id="CHEBI:78904"/>
        <dbReference type="ChEBI" id="CHEBI:87044"/>
    </reaction>
</comment>
<comment type="pathway">
    <text>Steroid biosynthesis; cholesterol biosynthesis.</text>
</comment>
<comment type="subcellular location">
    <subcellularLocation>
        <location evidence="2">Microsome membrane</location>
        <topology evidence="3">Multi-pass membrane protein</topology>
    </subcellularLocation>
    <subcellularLocation>
        <location evidence="4">Endoplasmic reticulum membrane</location>
        <topology evidence="3">Multi-pass membrane protein</topology>
    </subcellularLocation>
</comment>
<comment type="tissue specificity">
    <text evidence="4">Highly expressed in liver and brain.</text>
</comment>
<comment type="similarity">
    <text evidence="7">Belongs to the ERG4/ERG24 family.</text>
</comment>
<keyword id="KW-0152">Cholesterol biosynthesis</keyword>
<keyword id="KW-0153">Cholesterol metabolism</keyword>
<keyword id="KW-0903">Direct protein sequencing</keyword>
<keyword id="KW-0256">Endoplasmic reticulum</keyword>
<keyword id="KW-0444">Lipid biosynthesis</keyword>
<keyword id="KW-0443">Lipid metabolism</keyword>
<keyword id="KW-0472">Membrane</keyword>
<keyword id="KW-0492">Microsome</keyword>
<keyword id="KW-0521">NADP</keyword>
<keyword id="KW-0560">Oxidoreductase</keyword>
<keyword id="KW-1185">Reference proteome</keyword>
<keyword id="KW-0752">Steroid biosynthesis</keyword>
<keyword id="KW-0753">Steroid metabolism</keyword>
<keyword id="KW-0756">Sterol biosynthesis</keyword>
<keyword id="KW-1207">Sterol metabolism</keyword>
<keyword id="KW-0812">Transmembrane</keyword>
<keyword id="KW-1133">Transmembrane helix</keyword>